<reference key="1">
    <citation type="journal article" date="2005" name="Nature">
        <title>The genome of the social amoeba Dictyostelium discoideum.</title>
        <authorList>
            <person name="Eichinger L."/>
            <person name="Pachebat J.A."/>
            <person name="Gloeckner G."/>
            <person name="Rajandream M.A."/>
            <person name="Sucgang R."/>
            <person name="Berriman M."/>
            <person name="Song J."/>
            <person name="Olsen R."/>
            <person name="Szafranski K."/>
            <person name="Xu Q."/>
            <person name="Tunggal B."/>
            <person name="Kummerfeld S."/>
            <person name="Madera M."/>
            <person name="Konfortov B.A."/>
            <person name="Rivero F."/>
            <person name="Bankier A.T."/>
            <person name="Lehmann R."/>
            <person name="Hamlin N."/>
            <person name="Davies R."/>
            <person name="Gaudet P."/>
            <person name="Fey P."/>
            <person name="Pilcher K."/>
            <person name="Chen G."/>
            <person name="Saunders D."/>
            <person name="Sodergren E.J."/>
            <person name="Davis P."/>
            <person name="Kerhornou A."/>
            <person name="Nie X."/>
            <person name="Hall N."/>
            <person name="Anjard C."/>
            <person name="Hemphill L."/>
            <person name="Bason N."/>
            <person name="Farbrother P."/>
            <person name="Desany B."/>
            <person name="Just E."/>
            <person name="Morio T."/>
            <person name="Rost R."/>
            <person name="Churcher C.M."/>
            <person name="Cooper J."/>
            <person name="Haydock S."/>
            <person name="van Driessche N."/>
            <person name="Cronin A."/>
            <person name="Goodhead I."/>
            <person name="Muzny D.M."/>
            <person name="Mourier T."/>
            <person name="Pain A."/>
            <person name="Lu M."/>
            <person name="Harper D."/>
            <person name="Lindsay R."/>
            <person name="Hauser H."/>
            <person name="James K.D."/>
            <person name="Quiles M."/>
            <person name="Madan Babu M."/>
            <person name="Saito T."/>
            <person name="Buchrieser C."/>
            <person name="Wardroper A."/>
            <person name="Felder M."/>
            <person name="Thangavelu M."/>
            <person name="Johnson D."/>
            <person name="Knights A."/>
            <person name="Loulseged H."/>
            <person name="Mungall K.L."/>
            <person name="Oliver K."/>
            <person name="Price C."/>
            <person name="Quail M.A."/>
            <person name="Urushihara H."/>
            <person name="Hernandez J."/>
            <person name="Rabbinowitsch E."/>
            <person name="Steffen D."/>
            <person name="Sanders M."/>
            <person name="Ma J."/>
            <person name="Kohara Y."/>
            <person name="Sharp S."/>
            <person name="Simmonds M.N."/>
            <person name="Spiegler S."/>
            <person name="Tivey A."/>
            <person name="Sugano S."/>
            <person name="White B."/>
            <person name="Walker D."/>
            <person name="Woodward J.R."/>
            <person name="Winckler T."/>
            <person name="Tanaka Y."/>
            <person name="Shaulsky G."/>
            <person name="Schleicher M."/>
            <person name="Weinstock G.M."/>
            <person name="Rosenthal A."/>
            <person name="Cox E.C."/>
            <person name="Chisholm R.L."/>
            <person name="Gibbs R.A."/>
            <person name="Loomis W.F."/>
            <person name="Platzer M."/>
            <person name="Kay R.R."/>
            <person name="Williams J.G."/>
            <person name="Dear P.H."/>
            <person name="Noegel A.A."/>
            <person name="Barrell B.G."/>
            <person name="Kuspa A."/>
        </authorList>
    </citation>
    <scope>NUCLEOTIDE SEQUENCE [LARGE SCALE GENOMIC DNA]</scope>
    <source>
        <strain>AX4</strain>
    </source>
</reference>
<feature type="chain" id="PRO_0000390657" description="Putative alkaline ceramidase dcd3B">
    <location>
        <begin position="1"/>
        <end position="285"/>
    </location>
</feature>
<feature type="transmembrane region" description="Helical" evidence="1">
    <location>
        <begin position="34"/>
        <end position="54"/>
    </location>
</feature>
<feature type="transmembrane region" description="Helical" evidence="1">
    <location>
        <begin position="77"/>
        <end position="97"/>
    </location>
</feature>
<feature type="transmembrane region" description="Helical" evidence="1">
    <location>
        <begin position="104"/>
        <end position="124"/>
    </location>
</feature>
<feature type="transmembrane region" description="Helical" evidence="1">
    <location>
        <begin position="141"/>
        <end position="161"/>
    </location>
</feature>
<feature type="transmembrane region" description="Helical" evidence="1">
    <location>
        <begin position="166"/>
        <end position="186"/>
    </location>
</feature>
<feature type="transmembrane region" description="Helical" evidence="1">
    <location>
        <begin position="200"/>
        <end position="220"/>
    </location>
</feature>
<feature type="transmembrane region" description="Helical" evidence="1">
    <location>
        <begin position="236"/>
        <end position="256"/>
    </location>
</feature>
<feature type="glycosylation site" description="N-linked (GlcNAc...) asparagine" evidence="1">
    <location>
        <position position="131"/>
    </location>
</feature>
<proteinExistence type="inferred from homology"/>
<dbReference type="EC" id="3.5.1.-"/>
<dbReference type="EMBL" id="AAFI02000005">
    <property type="protein sequence ID" value="EAL72137.1"/>
    <property type="molecule type" value="Genomic_DNA"/>
</dbReference>
<dbReference type="RefSeq" id="XP_646081.1">
    <property type="nucleotide sequence ID" value="XM_640989.1"/>
</dbReference>
<dbReference type="SMR" id="Q55DQ0"/>
<dbReference type="FunCoup" id="Q55DQ0">
    <property type="interactions" value="229"/>
</dbReference>
<dbReference type="STRING" id="44689.Q55DQ0"/>
<dbReference type="GlyCosmos" id="Q55DQ0">
    <property type="glycosylation" value="1 site, No reported glycans"/>
</dbReference>
<dbReference type="GlyGen" id="Q55DQ0">
    <property type="glycosylation" value="1 site"/>
</dbReference>
<dbReference type="PaxDb" id="44689-DDB0232053"/>
<dbReference type="EnsemblProtists" id="EAL72137">
    <property type="protein sequence ID" value="EAL72137"/>
    <property type="gene ID" value="DDB_G0269574"/>
</dbReference>
<dbReference type="GeneID" id="8617031"/>
<dbReference type="KEGG" id="ddi:DDB_G0269574"/>
<dbReference type="dictyBase" id="DDB_G0269574">
    <property type="gene designation" value="dcd3B"/>
</dbReference>
<dbReference type="VEuPathDB" id="AmoebaDB:DDB_G0269574"/>
<dbReference type="eggNOG" id="KOG2329">
    <property type="taxonomic scope" value="Eukaryota"/>
</dbReference>
<dbReference type="HOGENOM" id="CLU_063293_3_0_1"/>
<dbReference type="InParanoid" id="Q55DQ0"/>
<dbReference type="OMA" id="YVITRYI"/>
<dbReference type="PhylomeDB" id="Q55DQ0"/>
<dbReference type="PRO" id="PR:Q55DQ0"/>
<dbReference type="Proteomes" id="UP000002195">
    <property type="component" value="Chromosome 1"/>
</dbReference>
<dbReference type="GO" id="GO:0005789">
    <property type="term" value="C:endoplasmic reticulum membrane"/>
    <property type="evidence" value="ECO:0000318"/>
    <property type="project" value="GO_Central"/>
</dbReference>
<dbReference type="GO" id="GO:0017040">
    <property type="term" value="F:N-acylsphingosine amidohydrolase activity"/>
    <property type="evidence" value="ECO:0000318"/>
    <property type="project" value="GO_Central"/>
</dbReference>
<dbReference type="GO" id="GO:0006672">
    <property type="term" value="P:ceramide metabolic process"/>
    <property type="evidence" value="ECO:0007669"/>
    <property type="project" value="InterPro"/>
</dbReference>
<dbReference type="InterPro" id="IPR008901">
    <property type="entry name" value="ACER"/>
</dbReference>
<dbReference type="PANTHER" id="PTHR46187">
    <property type="entry name" value="ALKALINE CERAMIDASE 3"/>
    <property type="match status" value="1"/>
</dbReference>
<dbReference type="PANTHER" id="PTHR46187:SF2">
    <property type="entry name" value="ALKALINE CERAMIDASE DCD3B-RELATED"/>
    <property type="match status" value="1"/>
</dbReference>
<dbReference type="Pfam" id="PF05875">
    <property type="entry name" value="Ceramidase"/>
    <property type="match status" value="1"/>
</dbReference>
<name>DCD3B_DICDI</name>
<evidence type="ECO:0000255" key="1"/>
<evidence type="ECO:0000305" key="2"/>
<accession>Q55DQ0</accession>
<comment type="subcellular location">
    <subcellularLocation>
        <location evidence="2">Membrane</location>
        <topology evidence="2">Multi-pass membrane protein</topology>
    </subcellularLocation>
</comment>
<comment type="similarity">
    <text evidence="2">Belongs to the alkaline ceramidase family.</text>
</comment>
<sequence>MENEINYWGVPDSPIDWCEENYIISKYICEFYNTFSSFIITAFGVYGIFLMMSASSRDQALFQHVKIMKELKIRQKVLFSYLSLAIVGVGSAFYHATLLYKNQLFDEFPMMLTASMFVYCILTIDPVDEKNDTATYKLMRRFLPYILSLYVIVVAITITIIRDSPIILQSSFGLLIFSNVFLSYMYTSRCLKTPVMESNPKKFLYLCIASMGIAYISWLTERKLCNNGYVIPGVQLHAVWHALTGLAGFYYIQFFITSCLEKHGYKTKLNWNYGIASVRGFIKSY</sequence>
<organism>
    <name type="scientific">Dictyostelium discoideum</name>
    <name type="common">Social amoeba</name>
    <dbReference type="NCBI Taxonomy" id="44689"/>
    <lineage>
        <taxon>Eukaryota</taxon>
        <taxon>Amoebozoa</taxon>
        <taxon>Evosea</taxon>
        <taxon>Eumycetozoa</taxon>
        <taxon>Dictyostelia</taxon>
        <taxon>Dictyosteliales</taxon>
        <taxon>Dictyosteliaceae</taxon>
        <taxon>Dictyostelium</taxon>
    </lineage>
</organism>
<protein>
    <recommendedName>
        <fullName>Putative alkaline ceramidase dcd3B</fullName>
        <ecNumber>3.5.1.-</ecNumber>
    </recommendedName>
</protein>
<keyword id="KW-0325">Glycoprotein</keyword>
<keyword id="KW-0378">Hydrolase</keyword>
<keyword id="KW-0472">Membrane</keyword>
<keyword id="KW-1185">Reference proteome</keyword>
<keyword id="KW-0812">Transmembrane</keyword>
<keyword id="KW-1133">Transmembrane helix</keyword>
<gene>
    <name type="primary">dcd3B</name>
    <name type="ORF">DDB_G0269574</name>
</gene>